<keyword id="KW-0929">Antimicrobial</keyword>
<keyword id="KW-0903">Direct protein sequencing</keyword>
<keyword id="KW-0295">Fungicide</keyword>
<keyword id="KW-1185">Reference proteome</keyword>
<accession>P84064</accession>
<comment type="function">
    <text evidence="2">Possesses antifungal activity against a number of phytopathogenic fungi, including H.sativum and F.culmorum.</text>
</comment>
<comment type="mass spectrometry">
    <molecule>Glycine-rich protein GWK isoform 1</molecule>
</comment>
<name>GRP1_CUCME</name>
<sequence>YKRGGGGWGGGGGWKGGGGGGGGWKGGGGGGKGGGG</sequence>
<reference evidence="3" key="1">
    <citation type="submission" date="2004-08" db="UniProtKB">
        <authorList>
            <person name="Vassilevski A.A."/>
            <person name="Egorov T.A."/>
            <person name="Grishin E.V."/>
        </authorList>
    </citation>
    <scope>PROTEIN SEQUENCE</scope>
    <scope>FUNCTION</scope>
    <scope>MASS SPECTROMETRY</scope>
    <source>
        <tissue>Seed</tissue>
    </source>
</reference>
<proteinExistence type="evidence at protein level"/>
<dbReference type="InParanoid" id="P84064"/>
<dbReference type="Proteomes" id="UP000089565">
    <property type="component" value="Unplaced"/>
</dbReference>
<dbReference type="Proteomes" id="UP000596662">
    <property type="component" value="Unplaced"/>
</dbReference>
<dbReference type="GO" id="GO:0050832">
    <property type="term" value="P:defense response to fungus"/>
    <property type="evidence" value="ECO:0007669"/>
    <property type="project" value="UniProtKB-KW"/>
</dbReference>
<dbReference type="GO" id="GO:0031640">
    <property type="term" value="P:killing of cells of another organism"/>
    <property type="evidence" value="ECO:0007669"/>
    <property type="project" value="UniProtKB-KW"/>
</dbReference>
<organism>
    <name type="scientific">Cucumis melo</name>
    <name type="common">Muskmelon</name>
    <dbReference type="NCBI Taxonomy" id="3656"/>
    <lineage>
        <taxon>Eukaryota</taxon>
        <taxon>Viridiplantae</taxon>
        <taxon>Streptophyta</taxon>
        <taxon>Embryophyta</taxon>
        <taxon>Tracheophyta</taxon>
        <taxon>Spermatophyta</taxon>
        <taxon>Magnoliopsida</taxon>
        <taxon>eudicotyledons</taxon>
        <taxon>Gunneridae</taxon>
        <taxon>Pentapetalae</taxon>
        <taxon>rosids</taxon>
        <taxon>fabids</taxon>
        <taxon>Cucurbitales</taxon>
        <taxon>Cucurbitaceae</taxon>
        <taxon>Benincaseae</taxon>
        <taxon>Cucumis</taxon>
    </lineage>
</organism>
<evidence type="ECO:0000256" key="1">
    <source>
        <dbReference type="SAM" id="MobiDB-lite"/>
    </source>
</evidence>
<evidence type="ECO:0000269" key="2">
    <source ref="1"/>
</evidence>
<evidence type="ECO:0000305" key="3"/>
<feature type="chain" id="PRO_0000046061" description="Glycine-rich protein GWK isoform 1">
    <location>
        <begin position="1"/>
        <end position="36"/>
    </location>
</feature>
<feature type="chain" id="PRO_0000046062" description="Glycine-rich protein GWK isoform 2">
    <location>
        <begin position="1"/>
        <end position="35"/>
    </location>
</feature>
<feature type="chain" id="PRO_0000046063" description="Glycine-rich protein GWK isoform 3">
    <location>
        <begin position="1"/>
        <end position="34"/>
    </location>
</feature>
<feature type="chain" id="PRO_0000046064" description="Glycine-rich protein GWK isoform 4">
    <location>
        <begin position="1"/>
        <end position="33"/>
    </location>
</feature>
<feature type="region of interest" description="Disordered" evidence="1">
    <location>
        <begin position="1"/>
        <end position="36"/>
    </location>
</feature>
<protein>
    <recommendedName>
        <fullName>Glycine-rich protein GWK</fullName>
    </recommendedName>
    <component>
        <recommendedName>
            <fullName>Glycine-rich protein GWK isoform 1</fullName>
        </recommendedName>
    </component>
    <component>
        <recommendedName>
            <fullName>Glycine-rich protein GWK isoform 2</fullName>
        </recommendedName>
    </component>
    <component>
        <recommendedName>
            <fullName>Glycine-rich protein GWK isoform 3</fullName>
        </recommendedName>
    </component>
    <component>
        <recommendedName>
            <fullName>Glycine-rich protein GWK isoform 4</fullName>
        </recommendedName>
    </component>
</protein>